<dbReference type="EC" id="2.5.1.10"/>
<dbReference type="EMBL" id="L42023">
    <property type="protein sequence ID" value="AAC23087.1"/>
    <property type="molecule type" value="Genomic_DNA"/>
</dbReference>
<dbReference type="PIR" id="C64123">
    <property type="entry name" value="C64123"/>
</dbReference>
<dbReference type="RefSeq" id="NP_439590.1">
    <property type="nucleotide sequence ID" value="NC_000907.1"/>
</dbReference>
<dbReference type="SMR" id="P45204"/>
<dbReference type="STRING" id="71421.HI_1438"/>
<dbReference type="EnsemblBacteria" id="AAC23087">
    <property type="protein sequence ID" value="AAC23087"/>
    <property type="gene ID" value="HI_1438"/>
</dbReference>
<dbReference type="KEGG" id="hin:HI_1438"/>
<dbReference type="PATRIC" id="fig|71421.8.peg.1500"/>
<dbReference type="eggNOG" id="COG0142">
    <property type="taxonomic scope" value="Bacteria"/>
</dbReference>
<dbReference type="HOGENOM" id="CLU_014015_0_1_6"/>
<dbReference type="OrthoDB" id="9805316at2"/>
<dbReference type="PhylomeDB" id="P45204"/>
<dbReference type="BioCyc" id="HINF71421:G1GJ1-1464-MONOMER"/>
<dbReference type="Proteomes" id="UP000000579">
    <property type="component" value="Chromosome"/>
</dbReference>
<dbReference type="GO" id="GO:0005737">
    <property type="term" value="C:cytoplasm"/>
    <property type="evidence" value="ECO:0007669"/>
    <property type="project" value="UniProtKB-SubCell"/>
</dbReference>
<dbReference type="GO" id="GO:0004337">
    <property type="term" value="F:(2E,6E)-farnesyl diphosphate synthase activity"/>
    <property type="evidence" value="ECO:0007669"/>
    <property type="project" value="UniProtKB-EC"/>
</dbReference>
<dbReference type="GO" id="GO:0046872">
    <property type="term" value="F:metal ion binding"/>
    <property type="evidence" value="ECO:0007669"/>
    <property type="project" value="UniProtKB-KW"/>
</dbReference>
<dbReference type="GO" id="GO:0004659">
    <property type="term" value="F:prenyltransferase activity"/>
    <property type="evidence" value="ECO:0000318"/>
    <property type="project" value="GO_Central"/>
</dbReference>
<dbReference type="GO" id="GO:0008299">
    <property type="term" value="P:isoprenoid biosynthetic process"/>
    <property type="evidence" value="ECO:0007669"/>
    <property type="project" value="UniProtKB-KW"/>
</dbReference>
<dbReference type="CDD" id="cd00685">
    <property type="entry name" value="Trans_IPPS_HT"/>
    <property type="match status" value="1"/>
</dbReference>
<dbReference type="FunFam" id="1.10.600.10:FF:000001">
    <property type="entry name" value="Geranylgeranyl diphosphate synthase"/>
    <property type="match status" value="1"/>
</dbReference>
<dbReference type="Gene3D" id="1.10.600.10">
    <property type="entry name" value="Farnesyl Diphosphate Synthase"/>
    <property type="match status" value="1"/>
</dbReference>
<dbReference type="InterPro" id="IPR008949">
    <property type="entry name" value="Isoprenoid_synthase_dom_sf"/>
</dbReference>
<dbReference type="InterPro" id="IPR000092">
    <property type="entry name" value="Polyprenyl_synt"/>
</dbReference>
<dbReference type="InterPro" id="IPR033749">
    <property type="entry name" value="Polyprenyl_synt_CS"/>
</dbReference>
<dbReference type="InterPro" id="IPR053378">
    <property type="entry name" value="Prenyl_diphosphate_synthase"/>
</dbReference>
<dbReference type="NCBIfam" id="NF045485">
    <property type="entry name" value="FPPsyn"/>
    <property type="match status" value="1"/>
</dbReference>
<dbReference type="NCBIfam" id="NF007877">
    <property type="entry name" value="PRK10581.1"/>
    <property type="match status" value="1"/>
</dbReference>
<dbReference type="PANTHER" id="PTHR43281">
    <property type="entry name" value="FARNESYL DIPHOSPHATE SYNTHASE"/>
    <property type="match status" value="1"/>
</dbReference>
<dbReference type="PANTHER" id="PTHR43281:SF1">
    <property type="entry name" value="FARNESYL DIPHOSPHATE SYNTHASE"/>
    <property type="match status" value="1"/>
</dbReference>
<dbReference type="Pfam" id="PF00348">
    <property type="entry name" value="polyprenyl_synt"/>
    <property type="match status" value="1"/>
</dbReference>
<dbReference type="SFLD" id="SFLDS00005">
    <property type="entry name" value="Isoprenoid_Synthase_Type_I"/>
    <property type="match status" value="1"/>
</dbReference>
<dbReference type="SFLD" id="SFLDG01017">
    <property type="entry name" value="Polyprenyl_Transferase_Like"/>
    <property type="match status" value="1"/>
</dbReference>
<dbReference type="SUPFAM" id="SSF48576">
    <property type="entry name" value="Terpenoid synthases"/>
    <property type="match status" value="1"/>
</dbReference>
<dbReference type="PROSITE" id="PS00723">
    <property type="entry name" value="POLYPRENYL_SYNTHASE_1"/>
    <property type="match status" value="1"/>
</dbReference>
<dbReference type="PROSITE" id="PS00444">
    <property type="entry name" value="POLYPRENYL_SYNTHASE_2"/>
    <property type="match status" value="1"/>
</dbReference>
<protein>
    <recommendedName>
        <fullName>Farnesyl diphosphate synthase</fullName>
        <shortName>FPP synthase</shortName>
        <ecNumber>2.5.1.10</ecNumber>
    </recommendedName>
    <alternativeName>
        <fullName>(2E,6E)-farnesyl diphosphate synthase</fullName>
    </alternativeName>
    <alternativeName>
        <fullName>Geranyltranstransferase</fullName>
    </alternativeName>
</protein>
<name>ISPA_HAEIN</name>
<accession>P45204</accession>
<comment type="catalytic activity">
    <reaction>
        <text>isopentenyl diphosphate + (2E)-geranyl diphosphate = (2E,6E)-farnesyl diphosphate + diphosphate</text>
        <dbReference type="Rhea" id="RHEA:19361"/>
        <dbReference type="ChEBI" id="CHEBI:33019"/>
        <dbReference type="ChEBI" id="CHEBI:58057"/>
        <dbReference type="ChEBI" id="CHEBI:128769"/>
        <dbReference type="ChEBI" id="CHEBI:175763"/>
        <dbReference type="EC" id="2.5.1.10"/>
    </reaction>
</comment>
<comment type="cofactor">
    <cofactor evidence="1">
        <name>Mg(2+)</name>
        <dbReference type="ChEBI" id="CHEBI:18420"/>
    </cofactor>
    <text evidence="1">Binds 2 Mg(2+) ions per subunit.</text>
</comment>
<comment type="subcellular location">
    <subcellularLocation>
        <location>Cytoplasm</location>
    </subcellularLocation>
</comment>
<comment type="similarity">
    <text evidence="4">Belongs to the FPP/GGPP synthase family.</text>
</comment>
<evidence type="ECO:0000250" key="1"/>
<evidence type="ECO:0000250" key="2">
    <source>
        <dbReference type="UniProtKB" id="P14324"/>
    </source>
</evidence>
<evidence type="ECO:0000250" key="3">
    <source>
        <dbReference type="UniProtKB" id="Q12051"/>
    </source>
</evidence>
<evidence type="ECO:0000305" key="4"/>
<organism>
    <name type="scientific">Haemophilus influenzae (strain ATCC 51907 / DSM 11121 / KW20 / Rd)</name>
    <dbReference type="NCBI Taxonomy" id="71421"/>
    <lineage>
        <taxon>Bacteria</taxon>
        <taxon>Pseudomonadati</taxon>
        <taxon>Pseudomonadota</taxon>
        <taxon>Gammaproteobacteria</taxon>
        <taxon>Pasteurellales</taxon>
        <taxon>Pasteurellaceae</taxon>
        <taxon>Haemophilus</taxon>
    </lineage>
</organism>
<reference key="1">
    <citation type="journal article" date="1995" name="Science">
        <title>Whole-genome random sequencing and assembly of Haemophilus influenzae Rd.</title>
        <authorList>
            <person name="Fleischmann R.D."/>
            <person name="Adams M.D."/>
            <person name="White O."/>
            <person name="Clayton R.A."/>
            <person name="Kirkness E.F."/>
            <person name="Kerlavage A.R."/>
            <person name="Bult C.J."/>
            <person name="Tomb J.-F."/>
            <person name="Dougherty B.A."/>
            <person name="Merrick J.M."/>
            <person name="McKenney K."/>
            <person name="Sutton G.G."/>
            <person name="FitzHugh W."/>
            <person name="Fields C.A."/>
            <person name="Gocayne J.D."/>
            <person name="Scott J.D."/>
            <person name="Shirley R."/>
            <person name="Liu L.-I."/>
            <person name="Glodek A."/>
            <person name="Kelley J.M."/>
            <person name="Weidman J.F."/>
            <person name="Phillips C.A."/>
            <person name="Spriggs T."/>
            <person name="Hedblom E."/>
            <person name="Cotton M.D."/>
            <person name="Utterback T.R."/>
            <person name="Hanna M.C."/>
            <person name="Nguyen D.T."/>
            <person name="Saudek D.M."/>
            <person name="Brandon R.C."/>
            <person name="Fine L.D."/>
            <person name="Fritchman J.L."/>
            <person name="Fuhrmann J.L."/>
            <person name="Geoghagen N.S.M."/>
            <person name="Gnehm C.L."/>
            <person name="McDonald L.A."/>
            <person name="Small K.V."/>
            <person name="Fraser C.M."/>
            <person name="Smith H.O."/>
            <person name="Venter J.C."/>
        </authorList>
    </citation>
    <scope>NUCLEOTIDE SEQUENCE [LARGE SCALE GENOMIC DNA]</scope>
    <source>
        <strain>ATCC 51907 / DSM 11121 / KW20 / Rd</strain>
    </source>
</reference>
<feature type="chain" id="PRO_0000123983" description="Farnesyl diphosphate synthase">
    <location>
        <begin position="1"/>
        <end position="295"/>
    </location>
</feature>
<feature type="binding site" evidence="2">
    <location>
        <position position="46"/>
    </location>
    <ligand>
        <name>isopentenyl diphosphate</name>
        <dbReference type="ChEBI" id="CHEBI:128769"/>
    </ligand>
</feature>
<feature type="binding site" evidence="2">
    <location>
        <position position="49"/>
    </location>
    <ligand>
        <name>isopentenyl diphosphate</name>
        <dbReference type="ChEBI" id="CHEBI:128769"/>
    </ligand>
</feature>
<feature type="binding site" evidence="3">
    <location>
        <position position="78"/>
    </location>
    <ligand>
        <name>isopentenyl diphosphate</name>
        <dbReference type="ChEBI" id="CHEBI:128769"/>
    </ligand>
</feature>
<feature type="binding site" evidence="2">
    <location>
        <position position="85"/>
    </location>
    <ligand>
        <name>Mg(2+)</name>
        <dbReference type="ChEBI" id="CHEBI:18420"/>
        <label>1</label>
    </ligand>
</feature>
<feature type="binding site" evidence="2">
    <location>
        <position position="85"/>
    </location>
    <ligand>
        <name>Mg(2+)</name>
        <dbReference type="ChEBI" id="CHEBI:18420"/>
        <label>2</label>
    </ligand>
</feature>
<feature type="binding site" evidence="2">
    <location>
        <position position="91"/>
    </location>
    <ligand>
        <name>Mg(2+)</name>
        <dbReference type="ChEBI" id="CHEBI:18420"/>
        <label>1</label>
    </ligand>
</feature>
<feature type="binding site" evidence="2">
    <location>
        <position position="91"/>
    </location>
    <ligand>
        <name>Mg(2+)</name>
        <dbReference type="ChEBI" id="CHEBI:18420"/>
        <label>2</label>
    </ligand>
</feature>
<feature type="binding site" evidence="1">
    <location>
        <position position="96"/>
    </location>
    <ligand>
        <name>(2E)-geranyl diphosphate</name>
        <dbReference type="ChEBI" id="CHEBI:58057"/>
    </ligand>
</feature>
<feature type="binding site" evidence="2">
    <location>
        <position position="97"/>
    </location>
    <ligand>
        <name>isopentenyl diphosphate</name>
        <dbReference type="ChEBI" id="CHEBI:128769"/>
    </ligand>
</feature>
<feature type="binding site" evidence="1">
    <location>
        <position position="180"/>
    </location>
    <ligand>
        <name>(2E)-geranyl diphosphate</name>
        <dbReference type="ChEBI" id="CHEBI:58057"/>
    </ligand>
</feature>
<feature type="binding site" evidence="1">
    <location>
        <position position="181"/>
    </location>
    <ligand>
        <name>(2E)-geranyl diphosphate</name>
        <dbReference type="ChEBI" id="CHEBI:58057"/>
    </ligand>
</feature>
<feature type="binding site" evidence="1">
    <location>
        <position position="220"/>
    </location>
    <ligand>
        <name>(2E)-geranyl diphosphate</name>
        <dbReference type="ChEBI" id="CHEBI:58057"/>
    </ligand>
</feature>
<feature type="binding site" evidence="1">
    <location>
        <position position="237"/>
    </location>
    <ligand>
        <name>(2E)-geranyl diphosphate</name>
        <dbReference type="ChEBI" id="CHEBI:58057"/>
    </ligand>
</feature>
<gene>
    <name type="primary">ispA</name>
    <name type="ordered locus">HI_1438</name>
</gene>
<proteinExistence type="inferred from homology"/>
<sequence>MGHFSEELQQVQTRINRFLEAQFEGIESHNAPLLEAMKYALLLGGKRVRPFLVYATGQMLGAEKQTLDYAAAAIEAIHAYSLIHDDLPAMDDDNLRRGHPTCHIQFDEATAILAGDALQSFAFEILTKTPNISTEQKLALIQILAQGAGVQGMCLGQSLDLISEHKQISLSELELIHRNKTGALLIAALKLGFICSPHFTDKRLEQSLTQYAEAIGLAFQVQDDILDIEGDSAEIGKQVGADLDLDKSTYPKLLGLSGAKQKAQDLYQSALSELEKIPFDTTVRALAEFIITRKS</sequence>
<keyword id="KW-0963">Cytoplasm</keyword>
<keyword id="KW-0414">Isoprene biosynthesis</keyword>
<keyword id="KW-0460">Magnesium</keyword>
<keyword id="KW-0479">Metal-binding</keyword>
<keyword id="KW-1185">Reference proteome</keyword>
<keyword id="KW-0808">Transferase</keyword>